<name>GATA_CORJK</name>
<proteinExistence type="inferred from homology"/>
<reference key="1">
    <citation type="journal article" date="2005" name="J. Bacteriol.">
        <title>Complete genome sequence and analysis of the multiresistant nosocomial pathogen Corynebacterium jeikeium K411, a lipid-requiring bacterium of the human skin flora.</title>
        <authorList>
            <person name="Tauch A."/>
            <person name="Kaiser O."/>
            <person name="Hain T."/>
            <person name="Goesmann A."/>
            <person name="Weisshaar B."/>
            <person name="Albersmeier A."/>
            <person name="Bekel T."/>
            <person name="Bischoff N."/>
            <person name="Brune I."/>
            <person name="Chakraborty T."/>
            <person name="Kalinowski J."/>
            <person name="Meyer F."/>
            <person name="Rupp O."/>
            <person name="Schneiker S."/>
            <person name="Viehoever P."/>
            <person name="Puehler A."/>
        </authorList>
    </citation>
    <scope>NUCLEOTIDE SEQUENCE [LARGE SCALE GENOMIC DNA]</scope>
    <source>
        <strain>K411</strain>
    </source>
</reference>
<accession>Q4JUM4</accession>
<keyword id="KW-0067">ATP-binding</keyword>
<keyword id="KW-0436">Ligase</keyword>
<keyword id="KW-0547">Nucleotide-binding</keyword>
<keyword id="KW-0648">Protein biosynthesis</keyword>
<keyword id="KW-1185">Reference proteome</keyword>
<protein>
    <recommendedName>
        <fullName evidence="1">Glutamyl-tRNA(Gln) amidotransferase subunit A</fullName>
        <shortName evidence="1">Glu-ADT subunit A</shortName>
        <ecNumber evidence="1">6.3.5.7</ecNumber>
    </recommendedName>
</protein>
<gene>
    <name evidence="1" type="primary">gatA</name>
    <name type="ordered locus">jk1311</name>
</gene>
<organism>
    <name type="scientific">Corynebacterium jeikeium (strain K411)</name>
    <dbReference type="NCBI Taxonomy" id="306537"/>
    <lineage>
        <taxon>Bacteria</taxon>
        <taxon>Bacillati</taxon>
        <taxon>Actinomycetota</taxon>
        <taxon>Actinomycetes</taxon>
        <taxon>Mycobacteriales</taxon>
        <taxon>Corynebacteriaceae</taxon>
        <taxon>Corynebacterium</taxon>
    </lineage>
</organism>
<comment type="function">
    <text evidence="1">Allows the formation of correctly charged Gln-tRNA(Gln) through the transamidation of misacylated Glu-tRNA(Gln) in organisms which lack glutaminyl-tRNA synthetase. The reaction takes place in the presence of glutamine and ATP through an activated gamma-phospho-Glu-tRNA(Gln).</text>
</comment>
<comment type="catalytic activity">
    <reaction evidence="1">
        <text>L-glutamyl-tRNA(Gln) + L-glutamine + ATP + H2O = L-glutaminyl-tRNA(Gln) + L-glutamate + ADP + phosphate + H(+)</text>
        <dbReference type="Rhea" id="RHEA:17521"/>
        <dbReference type="Rhea" id="RHEA-COMP:9681"/>
        <dbReference type="Rhea" id="RHEA-COMP:9684"/>
        <dbReference type="ChEBI" id="CHEBI:15377"/>
        <dbReference type="ChEBI" id="CHEBI:15378"/>
        <dbReference type="ChEBI" id="CHEBI:29985"/>
        <dbReference type="ChEBI" id="CHEBI:30616"/>
        <dbReference type="ChEBI" id="CHEBI:43474"/>
        <dbReference type="ChEBI" id="CHEBI:58359"/>
        <dbReference type="ChEBI" id="CHEBI:78520"/>
        <dbReference type="ChEBI" id="CHEBI:78521"/>
        <dbReference type="ChEBI" id="CHEBI:456216"/>
        <dbReference type="EC" id="6.3.5.7"/>
    </reaction>
</comment>
<comment type="subunit">
    <text evidence="1">Heterotrimer of A, B and C subunits.</text>
</comment>
<comment type="similarity">
    <text evidence="1">Belongs to the amidase family. GatA subfamily.</text>
</comment>
<feature type="chain" id="PRO_0000241091" description="Glutamyl-tRNA(Gln) amidotransferase subunit A">
    <location>
        <begin position="1"/>
        <end position="500"/>
    </location>
</feature>
<feature type="active site" description="Charge relay system" evidence="1">
    <location>
        <position position="93"/>
    </location>
</feature>
<feature type="active site" description="Charge relay system" evidence="1">
    <location>
        <position position="168"/>
    </location>
</feature>
<feature type="active site" description="Acyl-ester intermediate" evidence="1">
    <location>
        <position position="192"/>
    </location>
</feature>
<evidence type="ECO:0000255" key="1">
    <source>
        <dbReference type="HAMAP-Rule" id="MF_00120"/>
    </source>
</evidence>
<sequence length="500" mass="52593">MAENKYIVGSRDDSDFTTWTAAELAEKIHAREISSQEVTQAHLDRIGEIDGDIHAFLHVGADEALAAASNVDDALAAGDQPTSKLAGVPLALKDVFTTTDAPTTCASKMLEGYMSPYDATVTMRLRAAGIPILGKTNMDEFAMGSSTENSAYGATKNPYDLERTPGGSGGGSSAALAAGMAPLAIGTDTGGSIRQPAALTNTVGVKPTYGTVSRYGLVACASSLDQGGPTARTVLDTALLHEVIAGHDANDSTSSSHAVAPVVEAAKQGASGDLSGVKLGVVKQFEKAEAFQPGVLETYHANLEQLKSQGAELVEVDCPNFDHALNAYYLILPCEVSSNLARFDGMRYGQRRGDDGTRSADQVMSLTRAEGFGPEVKRRIMLGTYALSVGYYDAYYLQAQRVRNLISQDFAKAYEQVDAIVAPVTPSTAFKLGEKVDDPLAMYMFDLFTLPLNLAGVCGMSVPGGFASDSGLPTGLQIMGPAHGDDRLYRVGAAFEAGRS</sequence>
<dbReference type="EC" id="6.3.5.7" evidence="1"/>
<dbReference type="EMBL" id="CR931997">
    <property type="protein sequence ID" value="CAI37483.1"/>
    <property type="molecule type" value="Genomic_DNA"/>
</dbReference>
<dbReference type="RefSeq" id="WP_005292912.1">
    <property type="nucleotide sequence ID" value="NC_007164.1"/>
</dbReference>
<dbReference type="SMR" id="Q4JUM4"/>
<dbReference type="STRING" id="306537.jk1311"/>
<dbReference type="GeneID" id="92738892"/>
<dbReference type="KEGG" id="cjk:jk1311"/>
<dbReference type="eggNOG" id="COG0154">
    <property type="taxonomic scope" value="Bacteria"/>
</dbReference>
<dbReference type="HOGENOM" id="CLU_009600_0_3_11"/>
<dbReference type="OrthoDB" id="9811471at2"/>
<dbReference type="Proteomes" id="UP000000545">
    <property type="component" value="Chromosome"/>
</dbReference>
<dbReference type="GO" id="GO:0030956">
    <property type="term" value="C:glutamyl-tRNA(Gln) amidotransferase complex"/>
    <property type="evidence" value="ECO:0007669"/>
    <property type="project" value="InterPro"/>
</dbReference>
<dbReference type="GO" id="GO:0005524">
    <property type="term" value="F:ATP binding"/>
    <property type="evidence" value="ECO:0007669"/>
    <property type="project" value="UniProtKB-KW"/>
</dbReference>
<dbReference type="GO" id="GO:0050567">
    <property type="term" value="F:glutaminyl-tRNA synthase (glutamine-hydrolyzing) activity"/>
    <property type="evidence" value="ECO:0007669"/>
    <property type="project" value="UniProtKB-UniRule"/>
</dbReference>
<dbReference type="GO" id="GO:0006412">
    <property type="term" value="P:translation"/>
    <property type="evidence" value="ECO:0007669"/>
    <property type="project" value="UniProtKB-UniRule"/>
</dbReference>
<dbReference type="Gene3D" id="3.90.1300.10">
    <property type="entry name" value="Amidase signature (AS) domain"/>
    <property type="match status" value="1"/>
</dbReference>
<dbReference type="HAMAP" id="MF_00120">
    <property type="entry name" value="GatA"/>
    <property type="match status" value="1"/>
</dbReference>
<dbReference type="InterPro" id="IPR000120">
    <property type="entry name" value="Amidase"/>
</dbReference>
<dbReference type="InterPro" id="IPR020556">
    <property type="entry name" value="Amidase_CS"/>
</dbReference>
<dbReference type="InterPro" id="IPR023631">
    <property type="entry name" value="Amidase_dom"/>
</dbReference>
<dbReference type="InterPro" id="IPR036928">
    <property type="entry name" value="AS_sf"/>
</dbReference>
<dbReference type="InterPro" id="IPR004412">
    <property type="entry name" value="GatA"/>
</dbReference>
<dbReference type="NCBIfam" id="TIGR00132">
    <property type="entry name" value="gatA"/>
    <property type="match status" value="1"/>
</dbReference>
<dbReference type="PANTHER" id="PTHR11895:SF151">
    <property type="entry name" value="GLUTAMYL-TRNA(GLN) AMIDOTRANSFERASE SUBUNIT A"/>
    <property type="match status" value="1"/>
</dbReference>
<dbReference type="PANTHER" id="PTHR11895">
    <property type="entry name" value="TRANSAMIDASE"/>
    <property type="match status" value="1"/>
</dbReference>
<dbReference type="Pfam" id="PF01425">
    <property type="entry name" value="Amidase"/>
    <property type="match status" value="1"/>
</dbReference>
<dbReference type="SUPFAM" id="SSF75304">
    <property type="entry name" value="Amidase signature (AS) enzymes"/>
    <property type="match status" value="1"/>
</dbReference>
<dbReference type="PROSITE" id="PS00571">
    <property type="entry name" value="AMIDASES"/>
    <property type="match status" value="1"/>
</dbReference>